<protein>
    <recommendedName>
        <fullName evidence="2">K(+)-insensitive pyrophosphate-energized proton pump</fullName>
        <ecNumber evidence="2">7.1.3.1</ecNumber>
    </recommendedName>
    <alternativeName>
        <fullName evidence="2">Membrane-bound proton-translocating pyrophosphatase</fullName>
    </alternativeName>
    <alternativeName>
        <fullName evidence="2">Pyrophosphate-energized inorganic pyrophosphatase</fullName>
        <shortName evidence="2">H(+)-PPase</shortName>
    </alternativeName>
</protein>
<gene>
    <name evidence="2" type="primary">hppA</name>
    <name type="ordered locus">TTE0284</name>
</gene>
<dbReference type="EC" id="7.1.3.1" evidence="2"/>
<dbReference type="EMBL" id="AE008691">
    <property type="protein sequence ID" value="AAM23580.1"/>
    <property type="molecule type" value="Genomic_DNA"/>
</dbReference>
<dbReference type="RefSeq" id="WP_011024748.1">
    <property type="nucleotide sequence ID" value="NC_003869.1"/>
</dbReference>
<dbReference type="SMR" id="Q8RCX1"/>
<dbReference type="STRING" id="273068.TTE0284"/>
<dbReference type="KEGG" id="tte:TTE0284"/>
<dbReference type="eggNOG" id="COG3808">
    <property type="taxonomic scope" value="Bacteria"/>
</dbReference>
<dbReference type="HOGENOM" id="CLU_008743_3_1_9"/>
<dbReference type="OrthoDB" id="9808652at2"/>
<dbReference type="Proteomes" id="UP000000555">
    <property type="component" value="Chromosome"/>
</dbReference>
<dbReference type="GO" id="GO:0005886">
    <property type="term" value="C:plasma membrane"/>
    <property type="evidence" value="ECO:0007669"/>
    <property type="project" value="UniProtKB-SubCell"/>
</dbReference>
<dbReference type="GO" id="GO:0009678">
    <property type="term" value="F:diphosphate hydrolysis-driven proton transmembrane transporter activity"/>
    <property type="evidence" value="ECO:0007669"/>
    <property type="project" value="UniProtKB-UniRule"/>
</dbReference>
<dbReference type="GO" id="GO:0004427">
    <property type="term" value="F:inorganic diphosphate phosphatase activity"/>
    <property type="evidence" value="ECO:0007669"/>
    <property type="project" value="UniProtKB-UniRule"/>
</dbReference>
<dbReference type="GO" id="GO:0000287">
    <property type="term" value="F:magnesium ion binding"/>
    <property type="evidence" value="ECO:0007669"/>
    <property type="project" value="UniProtKB-UniRule"/>
</dbReference>
<dbReference type="HAMAP" id="MF_01129">
    <property type="entry name" value="PPase_energized_pump"/>
    <property type="match status" value="1"/>
</dbReference>
<dbReference type="InterPro" id="IPR004131">
    <property type="entry name" value="PPase-energised_H-pump"/>
</dbReference>
<dbReference type="NCBIfam" id="NF001953">
    <property type="entry name" value="PRK00733.2-1"/>
    <property type="match status" value="1"/>
</dbReference>
<dbReference type="NCBIfam" id="NF001960">
    <property type="entry name" value="PRK00733.3-5"/>
    <property type="match status" value="1"/>
</dbReference>
<dbReference type="NCBIfam" id="TIGR01104">
    <property type="entry name" value="V_PPase"/>
    <property type="match status" value="1"/>
</dbReference>
<dbReference type="PANTHER" id="PTHR31998">
    <property type="entry name" value="K(+)-INSENSITIVE PYROPHOSPHATE-ENERGIZED PROTON PUMP"/>
    <property type="match status" value="1"/>
</dbReference>
<dbReference type="Pfam" id="PF03030">
    <property type="entry name" value="H_PPase"/>
    <property type="match status" value="1"/>
</dbReference>
<dbReference type="PIRSF" id="PIRSF001265">
    <property type="entry name" value="H+-PPase"/>
    <property type="match status" value="1"/>
</dbReference>
<comment type="function">
    <text evidence="2">Proton pump that utilizes the energy of pyrophosphate hydrolysis as the driving force for proton movement across the membrane. Generates a proton motive force.</text>
</comment>
<comment type="catalytic activity">
    <reaction evidence="2">
        <text>diphosphate + H2O + H(+)(in) = 2 phosphate + 2 H(+)(out)</text>
        <dbReference type="Rhea" id="RHEA:13973"/>
        <dbReference type="ChEBI" id="CHEBI:15377"/>
        <dbReference type="ChEBI" id="CHEBI:15378"/>
        <dbReference type="ChEBI" id="CHEBI:33019"/>
        <dbReference type="ChEBI" id="CHEBI:43474"/>
        <dbReference type="EC" id="7.1.3.1"/>
    </reaction>
</comment>
<comment type="cofactor">
    <cofactor evidence="2">
        <name>Mg(2+)</name>
        <dbReference type="ChEBI" id="CHEBI:18420"/>
    </cofactor>
</comment>
<comment type="subunit">
    <text evidence="2">Homodimer.</text>
</comment>
<comment type="subcellular location">
    <subcellularLocation>
        <location evidence="2">Cell membrane</location>
        <topology evidence="2">Multi-pass membrane protein</topology>
    </subcellularLocation>
</comment>
<comment type="similarity">
    <text evidence="2">Belongs to the H(+)-translocating pyrophosphatase (TC 3.A.10) family. K(+)-insensitive subfamily.</text>
</comment>
<organism>
    <name type="scientific">Caldanaerobacter subterraneus subsp. tengcongensis (strain DSM 15242 / JCM 11007 / NBRC 100824 / MB4)</name>
    <name type="common">Thermoanaerobacter tengcongensis</name>
    <dbReference type="NCBI Taxonomy" id="273068"/>
    <lineage>
        <taxon>Bacteria</taxon>
        <taxon>Bacillati</taxon>
        <taxon>Bacillota</taxon>
        <taxon>Clostridia</taxon>
        <taxon>Thermoanaerobacterales</taxon>
        <taxon>Thermoanaerobacteraceae</taxon>
        <taxon>Caldanaerobacter</taxon>
    </lineage>
</organism>
<accession>Q8RCX1</accession>
<evidence type="ECO:0000250" key="1"/>
<evidence type="ECO:0000255" key="2">
    <source>
        <dbReference type="HAMAP-Rule" id="MF_01129"/>
    </source>
</evidence>
<keyword id="KW-0106">Calcium</keyword>
<keyword id="KW-1003">Cell membrane</keyword>
<keyword id="KW-0375">Hydrogen ion transport</keyword>
<keyword id="KW-0406">Ion transport</keyword>
<keyword id="KW-0460">Magnesium</keyword>
<keyword id="KW-0472">Membrane</keyword>
<keyword id="KW-0479">Metal-binding</keyword>
<keyword id="KW-1185">Reference proteome</keyword>
<keyword id="KW-1278">Translocase</keyword>
<keyword id="KW-0812">Transmembrane</keyword>
<keyword id="KW-1133">Transmembrane helix</keyword>
<keyword id="KW-0813">Transport</keyword>
<name>HPPA_CALS4</name>
<feature type="chain" id="PRO_0000217033" description="K(+)-insensitive pyrophosphate-energized proton pump">
    <location>
        <begin position="1"/>
        <end position="711"/>
    </location>
</feature>
<feature type="transmembrane region" description="Helical" evidence="2">
    <location>
        <begin position="7"/>
        <end position="27"/>
    </location>
</feature>
<feature type="transmembrane region" description="Helical" evidence="2">
    <location>
        <begin position="58"/>
        <end position="78"/>
    </location>
</feature>
<feature type="transmembrane region" description="Helical" evidence="2">
    <location>
        <begin position="85"/>
        <end position="105"/>
    </location>
</feature>
<feature type="transmembrane region" description="Helical" evidence="2">
    <location>
        <begin position="145"/>
        <end position="165"/>
    </location>
</feature>
<feature type="transmembrane region" description="Helical" evidence="2">
    <location>
        <begin position="179"/>
        <end position="199"/>
    </location>
</feature>
<feature type="transmembrane region" description="Helical" evidence="2">
    <location>
        <begin position="251"/>
        <end position="271"/>
    </location>
</feature>
<feature type="transmembrane region" description="Helical" evidence="2">
    <location>
        <begin position="274"/>
        <end position="294"/>
    </location>
</feature>
<feature type="transmembrane region" description="Helical" evidence="2">
    <location>
        <begin position="311"/>
        <end position="331"/>
    </location>
</feature>
<feature type="transmembrane region" description="Helical" evidence="2">
    <location>
        <begin position="343"/>
        <end position="363"/>
    </location>
</feature>
<feature type="transmembrane region" description="Helical" evidence="2">
    <location>
        <begin position="403"/>
        <end position="423"/>
    </location>
</feature>
<feature type="transmembrane region" description="Helical" evidence="2">
    <location>
        <begin position="431"/>
        <end position="451"/>
    </location>
</feature>
<feature type="transmembrane region" description="Helical" evidence="2">
    <location>
        <begin position="495"/>
        <end position="515"/>
    </location>
</feature>
<feature type="transmembrane region" description="Helical" evidence="2">
    <location>
        <begin position="535"/>
        <end position="555"/>
    </location>
</feature>
<feature type="transmembrane region" description="Helical" evidence="2">
    <location>
        <begin position="602"/>
        <end position="622"/>
    </location>
</feature>
<feature type="transmembrane region" description="Helical" evidence="2">
    <location>
        <begin position="624"/>
        <end position="644"/>
    </location>
</feature>
<feature type="transmembrane region" description="Helical" evidence="2">
    <location>
        <begin position="690"/>
        <end position="710"/>
    </location>
</feature>
<feature type="binding site" evidence="1">
    <location>
        <position position="202"/>
    </location>
    <ligand>
        <name>substrate</name>
    </ligand>
</feature>
<feature type="binding site" evidence="1">
    <location>
        <position position="205"/>
    </location>
    <ligand>
        <name>Mg(2+)</name>
        <dbReference type="ChEBI" id="CHEBI:18420"/>
        <label>1</label>
    </ligand>
</feature>
<feature type="binding site" evidence="1">
    <location>
        <position position="209"/>
    </location>
    <ligand>
        <name>Mg(2+)</name>
        <dbReference type="ChEBI" id="CHEBI:18420"/>
        <label>1</label>
    </ligand>
</feature>
<feature type="binding site" evidence="1">
    <location>
        <position position="235"/>
    </location>
    <ligand>
        <name>Mg(2+)</name>
        <dbReference type="ChEBI" id="CHEBI:18420"/>
        <label>2</label>
    </ligand>
</feature>
<feature type="binding site" evidence="1">
    <location>
        <position position="459"/>
    </location>
    <ligand>
        <name>Mg(2+)</name>
        <dbReference type="ChEBI" id="CHEBI:18420"/>
        <label>2</label>
    </ligand>
</feature>
<feature type="binding site" evidence="1">
    <location>
        <position position="652"/>
    </location>
    <ligand>
        <name>Ca(2+)</name>
        <dbReference type="ChEBI" id="CHEBI:29108"/>
    </ligand>
</feature>
<feature type="binding site" evidence="1">
    <location>
        <position position="678"/>
    </location>
    <ligand>
        <name>Ca(2+)</name>
        <dbReference type="ChEBI" id="CHEBI:29108"/>
    </ligand>
</feature>
<feature type="binding site" evidence="1">
    <location>
        <position position="682"/>
    </location>
    <ligand>
        <name>Ca(2+)</name>
        <dbReference type="ChEBI" id="CHEBI:29108"/>
    </ligand>
</feature>
<feature type="binding site" evidence="1">
    <location>
        <position position="685"/>
    </location>
    <ligand>
        <name>substrate</name>
    </ligand>
</feature>
<feature type="site" description="Important for ion transport" evidence="1">
    <location>
        <position position="239"/>
    </location>
</feature>
<feature type="site" description="Important for ion transport" evidence="1">
    <location>
        <position position="246"/>
    </location>
</feature>
<feature type="site" description="Determinant of potassium independence" evidence="2">
    <location>
        <position position="489"/>
    </location>
</feature>
<feature type="site" description="Important for ion transport" evidence="1">
    <location>
        <position position="686"/>
    </location>
</feature>
<feature type="site" description="Important for ion transport" evidence="1">
    <location>
        <position position="697"/>
    </location>
</feature>
<sequence length="711" mass="74381">MGAYLTLIYGVIVIAALVIIGLIKFIFAQDKGNEKMQQISDAIKEGAMAFLNRQYKTIASLALIVAVIIVVANYYGHLSEGSSQALSFALHVGFAFITGAFCSALSGYIGMYMAVNSNIRAAAGARSGLNRALQIALKGGAVTGLAVTALSLFGVATLFLAYGGLSGQDELIKEAPSLIVGFGFGASFVALFAQLGGGIYTKAADVGADLVGKVEAGIPEDDPRNPAVIADLVGDNVGDCAGRGADLFESTAAENIGAMILGVGLYPIFGWKGILFPLVARAIGIIASIIGIFFVNTKDESKDPMIALNKGYFVTTVVNLIALFFAVKVMLSGHLPDGRPVNYLLLYGAVVTGVILSYIFVFLTDYYTSVNKRPVQEIAKASTTGAATNIITGTSVGMESTALPVIFISAAIYIAYKLGEMAIPHIGTAGLYGTAIATMGMLSTTAYILAMDTFGPITDNAGGITEMSGAPEEIRRVTDRLDACGNTTKALTKGYAIGSAALATFLLFSAYLDEVKKILGKPIDSWFPVDIGKPEVFIGAFIGAMIVYLFSSTAIRAVGKAAQYVILEVRRQFREIPGIMEGTAKPDYARAVDIVTKGALKEMVIPGLIVVVTPILVGVILGKEAAAAFLMIGTISGVILALYLNNGGGAWDNAKKFIELGNYGGKGSDAHKASVVGDTVGDPFKDTAGPSLHVLIKLISTITLVFVALFR</sequence>
<reference key="1">
    <citation type="journal article" date="2002" name="Genome Res.">
        <title>A complete sequence of the T. tengcongensis genome.</title>
        <authorList>
            <person name="Bao Q."/>
            <person name="Tian Y."/>
            <person name="Li W."/>
            <person name="Xu Z."/>
            <person name="Xuan Z."/>
            <person name="Hu S."/>
            <person name="Dong W."/>
            <person name="Yang J."/>
            <person name="Chen Y."/>
            <person name="Xue Y."/>
            <person name="Xu Y."/>
            <person name="Lai X."/>
            <person name="Huang L."/>
            <person name="Dong X."/>
            <person name="Ma Y."/>
            <person name="Ling L."/>
            <person name="Tan H."/>
            <person name="Chen R."/>
            <person name="Wang J."/>
            <person name="Yu J."/>
            <person name="Yang H."/>
        </authorList>
    </citation>
    <scope>NUCLEOTIDE SEQUENCE [LARGE SCALE GENOMIC DNA]</scope>
    <source>
        <strain>DSM 15242 / JCM 11007 / NBRC 100824 / MB4</strain>
    </source>
</reference>
<proteinExistence type="inferred from homology"/>